<accession>Q9R154</accession>
<comment type="function">
    <text evidence="1 4 6 7">Sodium-independent transporter of chloride and iodide (PubMed:12107249, PubMed:26791486). Mediates electroneutral chloride-bicarbonate and chloride-formate exchange with 1:1 stoichiometry (PubMed:11208611). Mediates electroneutral iodide-chloride and iodide-bicarbonate exchange (By similarity).</text>
</comment>
<comment type="catalytic activity">
    <reaction evidence="6">
        <text>chloride(in) = chloride(out)</text>
        <dbReference type="Rhea" id="RHEA:29823"/>
        <dbReference type="ChEBI" id="CHEBI:17996"/>
    </reaction>
    <physiologicalReaction direction="right-to-left" evidence="9">
        <dbReference type="Rhea" id="RHEA:29825"/>
    </physiologicalReaction>
</comment>
<comment type="catalytic activity">
    <reaction evidence="6 7">
        <text>iodide(out) = iodide(in)</text>
        <dbReference type="Rhea" id="RHEA:66324"/>
        <dbReference type="ChEBI" id="CHEBI:16382"/>
    </reaction>
    <physiologicalReaction direction="left-to-right" evidence="9">
        <dbReference type="Rhea" id="RHEA:66325"/>
    </physiologicalReaction>
    <physiologicalReaction direction="right-to-left" evidence="9">
        <dbReference type="Rhea" id="RHEA:66326"/>
    </physiologicalReaction>
</comment>
<comment type="catalytic activity">
    <reaction evidence="4">
        <text>hydrogencarbonate(in) + chloride(out) = hydrogencarbonate(out) + chloride(in)</text>
        <dbReference type="Rhea" id="RHEA:72363"/>
        <dbReference type="ChEBI" id="CHEBI:17544"/>
        <dbReference type="ChEBI" id="CHEBI:17996"/>
    </reaction>
</comment>
<comment type="catalytic activity">
    <reaction evidence="1">
        <text>iodide(in) + hydrogencarbonate(out) = iodide(out) + hydrogencarbonate(in)</text>
        <dbReference type="Rhea" id="RHEA:72375"/>
        <dbReference type="ChEBI" id="CHEBI:16382"/>
        <dbReference type="ChEBI" id="CHEBI:17544"/>
    </reaction>
</comment>
<comment type="catalytic activity">
    <reaction evidence="1">
        <text>iodide(in) + chloride(out) = iodide(out) + chloride(in)</text>
        <dbReference type="Rhea" id="RHEA:72379"/>
        <dbReference type="ChEBI" id="CHEBI:16382"/>
        <dbReference type="ChEBI" id="CHEBI:17996"/>
    </reaction>
</comment>
<comment type="catalytic activity">
    <reaction evidence="4">
        <text>formate(in) + chloride(out) = formate(out) + chloride(in)</text>
        <dbReference type="Rhea" id="RHEA:72267"/>
        <dbReference type="ChEBI" id="CHEBI:15740"/>
        <dbReference type="ChEBI" id="CHEBI:17996"/>
    </reaction>
</comment>
<comment type="subcellular location">
    <subcellularLocation>
        <location evidence="7">Cell membrane</location>
        <topology evidence="2">Multi-pass membrane protein</topology>
    </subcellularLocation>
    <subcellularLocation>
        <location evidence="4 5">Apical cell membrane</location>
        <topology evidence="2">Multi-pass membrane protein</topology>
    </subcellularLocation>
</comment>
<comment type="tissue specificity">
    <text evidence="4 5">Highly expressed in the kidney (at protein level).</text>
</comment>
<comment type="similarity">
    <text evidence="8">Belongs to the SLC26A/SulP transporter (TC 2.A.53) family.</text>
</comment>
<feature type="chain" id="PRO_0000080166" description="Pendrin">
    <location>
        <begin position="1"/>
        <end position="780"/>
    </location>
</feature>
<feature type="topological domain" description="Cytoplasmic" evidence="2">
    <location>
        <begin position="1"/>
        <end position="87"/>
    </location>
</feature>
<feature type="transmembrane region" description="Helical" evidence="2">
    <location>
        <begin position="88"/>
        <end position="108"/>
    </location>
</feature>
<feature type="topological domain" description="Extracellular" evidence="2">
    <location>
        <position position="109"/>
    </location>
</feature>
<feature type="transmembrane region" description="Helical" evidence="2">
    <location>
        <begin position="110"/>
        <end position="130"/>
    </location>
</feature>
<feature type="topological domain" description="Cytoplasmic" evidence="2">
    <location>
        <begin position="131"/>
        <end position="135"/>
    </location>
</feature>
<feature type="transmembrane region" description="Helical" evidence="2">
    <location>
        <begin position="136"/>
        <end position="156"/>
    </location>
</feature>
<feature type="topological domain" description="Extracellular" evidence="2">
    <location>
        <begin position="157"/>
        <end position="191"/>
    </location>
</feature>
<feature type="transmembrane region" description="Helical" evidence="2">
    <location>
        <begin position="192"/>
        <end position="212"/>
    </location>
</feature>
<feature type="topological domain" description="Cytoplasmic" evidence="2">
    <location>
        <begin position="213"/>
        <end position="218"/>
    </location>
</feature>
<feature type="transmembrane region" description="Helical" evidence="2">
    <location>
        <begin position="219"/>
        <end position="239"/>
    </location>
</feature>
<feature type="topological domain" description="Extracellular" evidence="2">
    <location>
        <begin position="240"/>
        <end position="263"/>
    </location>
</feature>
<feature type="transmembrane region" description="Helical" evidence="2">
    <location>
        <begin position="264"/>
        <end position="284"/>
    </location>
</feature>
<feature type="topological domain" description="Cytoplasmic" evidence="2">
    <location>
        <begin position="285"/>
        <end position="295"/>
    </location>
</feature>
<feature type="transmembrane region" description="Helical" evidence="2">
    <location>
        <begin position="296"/>
        <end position="316"/>
    </location>
</feature>
<feature type="topological domain" description="Extracellular" evidence="2">
    <location>
        <begin position="317"/>
        <end position="344"/>
    </location>
</feature>
<feature type="transmembrane region" description="Helical" evidence="2">
    <location>
        <begin position="345"/>
        <end position="365"/>
    </location>
</feature>
<feature type="topological domain" description="Cytoplasmic" evidence="2">
    <location>
        <begin position="366"/>
        <end position="384"/>
    </location>
</feature>
<feature type="transmembrane region" description="Helical" evidence="2">
    <location>
        <begin position="385"/>
        <end position="405"/>
    </location>
</feature>
<feature type="topological domain" description="Extracellular" evidence="2">
    <location>
        <begin position="406"/>
        <end position="421"/>
    </location>
</feature>
<feature type="transmembrane region" description="Helical" evidence="2">
    <location>
        <begin position="422"/>
        <end position="442"/>
    </location>
</feature>
<feature type="topological domain" description="Cytoplasmic" evidence="2">
    <location>
        <begin position="443"/>
        <end position="448"/>
    </location>
</feature>
<feature type="transmembrane region" description="Helical" evidence="2">
    <location>
        <begin position="449"/>
        <end position="469"/>
    </location>
</feature>
<feature type="topological domain" description="Extracellular" evidence="2">
    <location>
        <begin position="470"/>
        <end position="486"/>
    </location>
</feature>
<feature type="transmembrane region" description="Helical" evidence="2">
    <location>
        <begin position="487"/>
        <end position="507"/>
    </location>
</feature>
<feature type="topological domain" description="Cytoplasmic" evidence="2">
    <location>
        <begin position="508"/>
        <end position="780"/>
    </location>
</feature>
<feature type="domain" description="STAS" evidence="3">
    <location>
        <begin position="535"/>
        <end position="729"/>
    </location>
</feature>
<proteinExistence type="evidence at protein level"/>
<sequence length="780" mass="85715">MAARDRRSEPPQLAEYSCSYAVSRPVYSELAFQQQRERRLPERRTLRDSLARSCSCSRKRAFGALKALLPILDWLPKYRVKEWLLSDIISGVSTGLVGTLQGMAYALLAAVPVQYGLYSAFFPILTYFVFGTSRHISVGPFPVVSLMVGSVVLSMAPDDHFLVPSGNGSTLNTTTLDTGTRDAARVLLASTLTLLVGIIQLVFGGLQIGFIVRYLADPLVGGFTTAAAFQVLVSQLKIVLNVSTKNYNGVLSIIYTLIEIFQNIGDTNIADFIAGLLTIIVCMAVKELNDRFKHKIPVPIPIEVIVTIIATAISYGANLEANYNAGIVKSIPSGFLPPVLPSVGLFSDMLAASFSIAVVAYAIAVSVGKVYATKHDYIIDGNQEFIAFGISNVFSGFFSCFVATTALSRTAVQESTGGKTQVAGLISAVIVMVAIVALGKLLEPLQKSVLAAVVIANLKGMFMQVCDVPRLWKQNKTDAVIWVFTCIMSIILGLDLGLLAGLLFGLLTVVLRVQFPSWNGLGSVPSTDIYKSITHYKNLEEPEGVKILRFSSPIFYGNVDGFKKCVKSTVGFDAIRVYNKRLKALRRIQKLIKKGQLRATKNGIISDVGSSNNAFEPDEDVEEPEELDIPTKEIEIQVDWNSELPVKVNVPKVPIHSLVLDCGAVSFLDVVGVRSLRMIVKEFQRIDVNVYFALLQDDVLEKMEQCGFFDDNIRKDRFFLTVHDAILYLQNQAKSREGQDSLLETITLIQDCKDPLELMEAEINEEELDVQDEAMRRLAS</sequence>
<protein>
    <recommendedName>
        <fullName>Pendrin</fullName>
    </recommendedName>
    <alternativeName>
        <fullName>Sodium-independent chloride/iodide transporter</fullName>
    </alternativeName>
    <alternativeName>
        <fullName>Solute carrier family 26 member 4</fullName>
    </alternativeName>
</protein>
<name>S26A4_RAT</name>
<organism>
    <name type="scientific">Rattus norvegicus</name>
    <name type="common">Rat</name>
    <dbReference type="NCBI Taxonomy" id="10116"/>
    <lineage>
        <taxon>Eukaryota</taxon>
        <taxon>Metazoa</taxon>
        <taxon>Chordata</taxon>
        <taxon>Craniata</taxon>
        <taxon>Vertebrata</taxon>
        <taxon>Euteleostomi</taxon>
        <taxon>Mammalia</taxon>
        <taxon>Eutheria</taxon>
        <taxon>Euarchontoglires</taxon>
        <taxon>Glires</taxon>
        <taxon>Rodentia</taxon>
        <taxon>Myomorpha</taxon>
        <taxon>Muroidea</taxon>
        <taxon>Muridae</taxon>
        <taxon>Murinae</taxon>
        <taxon>Rattus</taxon>
    </lineage>
</organism>
<evidence type="ECO:0000250" key="1">
    <source>
        <dbReference type="UniProtKB" id="Q9R155"/>
    </source>
</evidence>
<evidence type="ECO:0000255" key="2"/>
<evidence type="ECO:0000255" key="3">
    <source>
        <dbReference type="PROSITE-ProRule" id="PRU00198"/>
    </source>
</evidence>
<evidence type="ECO:0000269" key="4">
    <source>
    </source>
</evidence>
<evidence type="ECO:0000269" key="5">
    <source>
    </source>
</evidence>
<evidence type="ECO:0000269" key="6">
    <source>
    </source>
</evidence>
<evidence type="ECO:0000269" key="7">
    <source>
    </source>
</evidence>
<evidence type="ECO:0000305" key="8"/>
<evidence type="ECO:0000305" key="9">
    <source>
    </source>
</evidence>
<dbReference type="EMBL" id="AF167412">
    <property type="protein sequence ID" value="AAD51618.1"/>
    <property type="molecule type" value="mRNA"/>
</dbReference>
<dbReference type="RefSeq" id="NP_062087.1">
    <property type="nucleotide sequence ID" value="NM_019214.1"/>
</dbReference>
<dbReference type="RefSeq" id="XP_008762798.1">
    <property type="nucleotide sequence ID" value="XM_008764576.4"/>
</dbReference>
<dbReference type="RefSeq" id="XP_017449543.1">
    <property type="nucleotide sequence ID" value="XM_017594054.3"/>
</dbReference>
<dbReference type="SMR" id="Q9R154"/>
<dbReference type="FunCoup" id="Q9R154">
    <property type="interactions" value="440"/>
</dbReference>
<dbReference type="STRING" id="10116.ENSRNOP00000070261"/>
<dbReference type="PhosphoSitePlus" id="Q9R154"/>
<dbReference type="PaxDb" id="10116-ENSRNOP00000010350"/>
<dbReference type="Ensembl" id="ENSRNOT00000087300.2">
    <property type="protein sequence ID" value="ENSRNOP00000070261.1"/>
    <property type="gene ID" value="ENSRNOG00000058692.2"/>
</dbReference>
<dbReference type="GeneID" id="29440"/>
<dbReference type="KEGG" id="rno:29440"/>
<dbReference type="UCSC" id="RGD:3293">
    <property type="organism name" value="rat"/>
</dbReference>
<dbReference type="AGR" id="RGD:3293"/>
<dbReference type="CTD" id="5172"/>
<dbReference type="RGD" id="3293">
    <property type="gene designation" value="Slc26a4"/>
</dbReference>
<dbReference type="eggNOG" id="KOG0236">
    <property type="taxonomic scope" value="Eukaryota"/>
</dbReference>
<dbReference type="GeneTree" id="ENSGT01070000253775"/>
<dbReference type="HOGENOM" id="CLU_003182_9_4_1"/>
<dbReference type="InParanoid" id="Q9R154"/>
<dbReference type="OMA" id="IVCMAVK"/>
<dbReference type="OrthoDB" id="288203at2759"/>
<dbReference type="PhylomeDB" id="Q9R154"/>
<dbReference type="TreeFam" id="TF313784"/>
<dbReference type="Reactome" id="R-RNO-427601">
    <property type="pathway name" value="Multifunctional anion exchangers"/>
</dbReference>
<dbReference type="PRO" id="PR:Q9R154"/>
<dbReference type="Proteomes" id="UP000002494">
    <property type="component" value="Chromosome 6"/>
</dbReference>
<dbReference type="Bgee" id="ENSRNOG00000058692">
    <property type="expression patterns" value="Expressed in kidney and 8 other cell types or tissues"/>
</dbReference>
<dbReference type="GO" id="GO:0016324">
    <property type="term" value="C:apical plasma membrane"/>
    <property type="evidence" value="ECO:0000314"/>
    <property type="project" value="UniProtKB"/>
</dbReference>
<dbReference type="GO" id="GO:0031526">
    <property type="term" value="C:brush border membrane"/>
    <property type="evidence" value="ECO:0000250"/>
    <property type="project" value="UniProtKB"/>
</dbReference>
<dbReference type="GO" id="GO:0070062">
    <property type="term" value="C:extracellular exosome"/>
    <property type="evidence" value="ECO:0000266"/>
    <property type="project" value="RGD"/>
</dbReference>
<dbReference type="GO" id="GO:0016020">
    <property type="term" value="C:membrane"/>
    <property type="evidence" value="ECO:0000266"/>
    <property type="project" value="RGD"/>
</dbReference>
<dbReference type="GO" id="GO:0005886">
    <property type="term" value="C:plasma membrane"/>
    <property type="evidence" value="ECO:0000314"/>
    <property type="project" value="UniProtKB"/>
</dbReference>
<dbReference type="GO" id="GO:0015106">
    <property type="term" value="F:bicarbonate transmembrane transporter activity"/>
    <property type="evidence" value="ECO:0000318"/>
    <property type="project" value="GO_Central"/>
</dbReference>
<dbReference type="GO" id="GO:0015108">
    <property type="term" value="F:chloride transmembrane transporter activity"/>
    <property type="evidence" value="ECO:0000314"/>
    <property type="project" value="RGD"/>
</dbReference>
<dbReference type="GO" id="GO:0140900">
    <property type="term" value="F:chloride:bicarbonate antiporter activity"/>
    <property type="evidence" value="ECO:0000314"/>
    <property type="project" value="UniProtKB"/>
</dbReference>
<dbReference type="GO" id="GO:0015111">
    <property type="term" value="F:iodide transmembrane transporter activity"/>
    <property type="evidence" value="ECO:0000314"/>
    <property type="project" value="UniProtKB"/>
</dbReference>
<dbReference type="GO" id="GO:0019531">
    <property type="term" value="F:oxalate transmembrane transporter activity"/>
    <property type="evidence" value="ECO:0000318"/>
    <property type="project" value="GO_Central"/>
</dbReference>
<dbReference type="GO" id="GO:0008271">
    <property type="term" value="F:secondary active sulfate transmembrane transporter activity"/>
    <property type="evidence" value="ECO:0007669"/>
    <property type="project" value="InterPro"/>
</dbReference>
<dbReference type="GO" id="GO:0015116">
    <property type="term" value="F:sulfate transmembrane transporter activity"/>
    <property type="evidence" value="ECO:0000318"/>
    <property type="project" value="GO_Central"/>
</dbReference>
<dbReference type="GO" id="GO:1902476">
    <property type="term" value="P:chloride transmembrane transport"/>
    <property type="evidence" value="ECO:0000318"/>
    <property type="project" value="GO_Central"/>
</dbReference>
<dbReference type="GO" id="GO:0015698">
    <property type="term" value="P:inorganic anion transport"/>
    <property type="evidence" value="ECO:0000314"/>
    <property type="project" value="RGD"/>
</dbReference>
<dbReference type="GO" id="GO:0015705">
    <property type="term" value="P:iodide transport"/>
    <property type="evidence" value="ECO:0000266"/>
    <property type="project" value="RGD"/>
</dbReference>
<dbReference type="GO" id="GO:0006885">
    <property type="term" value="P:regulation of pH"/>
    <property type="evidence" value="ECO:0000250"/>
    <property type="project" value="UniProtKB"/>
</dbReference>
<dbReference type="GO" id="GO:0032880">
    <property type="term" value="P:regulation of protein localization"/>
    <property type="evidence" value="ECO:0000250"/>
    <property type="project" value="UniProtKB"/>
</dbReference>
<dbReference type="GO" id="GO:1902358">
    <property type="term" value="P:sulfate transmembrane transport"/>
    <property type="evidence" value="ECO:0000318"/>
    <property type="project" value="GO_Central"/>
</dbReference>
<dbReference type="CDD" id="cd07042">
    <property type="entry name" value="STAS_SulP_like_sulfate_transporter"/>
    <property type="match status" value="1"/>
</dbReference>
<dbReference type="Gene3D" id="3.30.750.24">
    <property type="entry name" value="STAS domain"/>
    <property type="match status" value="1"/>
</dbReference>
<dbReference type="InterPro" id="IPR018045">
    <property type="entry name" value="S04_transporter_CS"/>
</dbReference>
<dbReference type="InterPro" id="IPR011547">
    <property type="entry name" value="SLC26A/SulP_dom"/>
</dbReference>
<dbReference type="InterPro" id="IPR001902">
    <property type="entry name" value="SLC26A/SulP_fam"/>
</dbReference>
<dbReference type="InterPro" id="IPR002645">
    <property type="entry name" value="STAS_dom"/>
</dbReference>
<dbReference type="InterPro" id="IPR036513">
    <property type="entry name" value="STAS_dom_sf"/>
</dbReference>
<dbReference type="NCBIfam" id="TIGR00815">
    <property type="entry name" value="sulP"/>
    <property type="match status" value="1"/>
</dbReference>
<dbReference type="PANTHER" id="PTHR11814">
    <property type="entry name" value="SULFATE TRANSPORTER"/>
    <property type="match status" value="1"/>
</dbReference>
<dbReference type="Pfam" id="PF01740">
    <property type="entry name" value="STAS"/>
    <property type="match status" value="1"/>
</dbReference>
<dbReference type="Pfam" id="PF00916">
    <property type="entry name" value="Sulfate_transp"/>
    <property type="match status" value="1"/>
</dbReference>
<dbReference type="SUPFAM" id="SSF52091">
    <property type="entry name" value="SpoIIaa-like"/>
    <property type="match status" value="1"/>
</dbReference>
<dbReference type="PROSITE" id="PS01130">
    <property type="entry name" value="SLC26A"/>
    <property type="match status" value="1"/>
</dbReference>
<dbReference type="PROSITE" id="PS50801">
    <property type="entry name" value="STAS"/>
    <property type="match status" value="1"/>
</dbReference>
<gene>
    <name type="primary">Slc26a4</name>
    <name type="synonym">Pds</name>
</gene>
<reference key="1">
    <citation type="journal article" date="1999" name="Proc. Natl. Acad. Sci. U.S.A.">
        <title>Expression pattern of the mouse ortholog of the Pendred's syndrome gene (Pds) suggests a key role for pendrin in the inner ear.</title>
        <authorList>
            <person name="Everett L.A."/>
            <person name="Morsli H."/>
            <person name="Wu D.K."/>
            <person name="Green E.D."/>
        </authorList>
    </citation>
    <scope>NUCLEOTIDE SEQUENCE [MRNA]</scope>
    <source>
        <strain>Sprague-Dawley</strain>
    </source>
</reference>
<reference key="2">
    <citation type="journal article" date="2001" name="Am. J. Physiol.">
        <title>Pendrin: an apical Cl-/OH-/HCO3- exchanger in the kidney cortex.</title>
        <authorList>
            <person name="Soleimani M."/>
            <person name="Greeley T."/>
            <person name="Petrovic S."/>
            <person name="Wang Z."/>
            <person name="Amlal H."/>
            <person name="Kopp P."/>
            <person name="Burnham C.E."/>
        </authorList>
    </citation>
    <scope>FUNCTION</scope>
    <scope>TRANSPORTER ACTIVITY</scope>
    <scope>SUBCELLULAR LOCATION</scope>
</reference>
<reference key="3">
    <citation type="journal article" date="2001" name="Proc. Natl. Acad. Sci. U.S.A.">
        <title>Pendrin, encoded by the Pendred syndrome gene, resides in the apical region of renal intercalated cells and mediates bicarbonate secretion.</title>
        <authorList>
            <person name="Royaux I.E."/>
            <person name="Wall S.M."/>
            <person name="Karniski L.P."/>
            <person name="Everett L.A."/>
            <person name="Suzuki K."/>
            <person name="Knepper M.A."/>
            <person name="Green E.D."/>
        </authorList>
    </citation>
    <scope>SUBCELLULAR LOCATION</scope>
    <scope>TISSUE SPECIFICITY</scope>
</reference>
<reference key="4">
    <citation type="journal article" date="2002" name="J. Clin. Endocrinol. Metab.">
        <title>Pendrin is an iodide-specific apical porter responsible for iodide efflux from thyroid cells.</title>
        <authorList>
            <person name="Yoshida A."/>
            <person name="Taniguchi S."/>
            <person name="Hisatome I."/>
            <person name="Royaux I.E."/>
            <person name="Green E.D."/>
            <person name="Kohn L.D."/>
            <person name="Suzuki K."/>
        </authorList>
    </citation>
    <scope>FUNCTION</scope>
    <scope>TRANSPORTER ACTIVITY</scope>
</reference>
<reference key="5">
    <citation type="journal article" date="2016" name="Am. J. Physiol.">
        <title>Iodide excess regulates its own efflux: a possible involvement of pendrin.</title>
        <authorList>
            <person name="Calil-Silveira J."/>
            <person name="Serrano-Nascimento C."/>
            <person name="Kopp P.A."/>
            <person name="Nunes M.T."/>
        </authorList>
    </citation>
    <scope>FUNCTION</scope>
    <scope>TRANSPORTER ACTIVITY</scope>
    <scope>SUBCELLULAR LOCATION</scope>
</reference>
<keyword id="KW-1003">Cell membrane</keyword>
<keyword id="KW-0868">Chloride</keyword>
<keyword id="KW-0472">Membrane</keyword>
<keyword id="KW-1185">Reference proteome</keyword>
<keyword id="KW-0812">Transmembrane</keyword>
<keyword id="KW-1133">Transmembrane helix</keyword>
<keyword id="KW-0813">Transport</keyword>